<feature type="chain" id="PRO_1000139522" description="CTP synthase">
    <location>
        <begin position="1"/>
        <end position="555"/>
    </location>
</feature>
<feature type="domain" description="Glutamine amidotransferase type-1" evidence="1">
    <location>
        <begin position="292"/>
        <end position="534"/>
    </location>
</feature>
<feature type="region of interest" description="Amidoligase domain" evidence="1">
    <location>
        <begin position="1"/>
        <end position="267"/>
    </location>
</feature>
<feature type="region of interest" description="Disordered" evidence="2">
    <location>
        <begin position="536"/>
        <end position="555"/>
    </location>
</feature>
<feature type="compositionally biased region" description="Basic and acidic residues" evidence="2">
    <location>
        <begin position="546"/>
        <end position="555"/>
    </location>
</feature>
<feature type="active site" description="Nucleophile; for glutamine hydrolysis" evidence="1">
    <location>
        <position position="381"/>
    </location>
</feature>
<feature type="active site" evidence="1">
    <location>
        <position position="507"/>
    </location>
</feature>
<feature type="active site" evidence="1">
    <location>
        <position position="509"/>
    </location>
</feature>
<feature type="binding site" evidence="1">
    <location>
        <position position="13"/>
    </location>
    <ligand>
        <name>CTP</name>
        <dbReference type="ChEBI" id="CHEBI:37563"/>
        <note>allosteric inhibitor</note>
    </ligand>
</feature>
<feature type="binding site" evidence="1">
    <location>
        <position position="13"/>
    </location>
    <ligand>
        <name>UTP</name>
        <dbReference type="ChEBI" id="CHEBI:46398"/>
    </ligand>
</feature>
<feature type="binding site" evidence="1">
    <location>
        <begin position="14"/>
        <end position="19"/>
    </location>
    <ligand>
        <name>ATP</name>
        <dbReference type="ChEBI" id="CHEBI:30616"/>
    </ligand>
</feature>
<feature type="binding site" evidence="1">
    <location>
        <position position="71"/>
    </location>
    <ligand>
        <name>ATP</name>
        <dbReference type="ChEBI" id="CHEBI:30616"/>
    </ligand>
</feature>
<feature type="binding site" evidence="1">
    <location>
        <position position="71"/>
    </location>
    <ligand>
        <name>Mg(2+)</name>
        <dbReference type="ChEBI" id="CHEBI:18420"/>
    </ligand>
</feature>
<feature type="binding site" evidence="1">
    <location>
        <position position="141"/>
    </location>
    <ligand>
        <name>Mg(2+)</name>
        <dbReference type="ChEBI" id="CHEBI:18420"/>
    </ligand>
</feature>
<feature type="binding site" evidence="1">
    <location>
        <begin position="148"/>
        <end position="150"/>
    </location>
    <ligand>
        <name>CTP</name>
        <dbReference type="ChEBI" id="CHEBI:37563"/>
        <note>allosteric inhibitor</note>
    </ligand>
</feature>
<feature type="binding site" evidence="1">
    <location>
        <begin position="188"/>
        <end position="193"/>
    </location>
    <ligand>
        <name>CTP</name>
        <dbReference type="ChEBI" id="CHEBI:37563"/>
        <note>allosteric inhibitor</note>
    </ligand>
</feature>
<feature type="binding site" evidence="1">
    <location>
        <begin position="188"/>
        <end position="193"/>
    </location>
    <ligand>
        <name>UTP</name>
        <dbReference type="ChEBI" id="CHEBI:46398"/>
    </ligand>
</feature>
<feature type="binding site" evidence="1">
    <location>
        <position position="224"/>
    </location>
    <ligand>
        <name>CTP</name>
        <dbReference type="ChEBI" id="CHEBI:37563"/>
        <note>allosteric inhibitor</note>
    </ligand>
</feature>
<feature type="binding site" evidence="1">
    <location>
        <position position="224"/>
    </location>
    <ligand>
        <name>UTP</name>
        <dbReference type="ChEBI" id="CHEBI:46398"/>
    </ligand>
</feature>
<feature type="binding site" evidence="1">
    <location>
        <position position="354"/>
    </location>
    <ligand>
        <name>L-glutamine</name>
        <dbReference type="ChEBI" id="CHEBI:58359"/>
    </ligand>
</feature>
<feature type="binding site" evidence="1">
    <location>
        <begin position="382"/>
        <end position="385"/>
    </location>
    <ligand>
        <name>L-glutamine</name>
        <dbReference type="ChEBI" id="CHEBI:58359"/>
    </ligand>
</feature>
<feature type="binding site" evidence="1">
    <location>
        <position position="405"/>
    </location>
    <ligand>
        <name>L-glutamine</name>
        <dbReference type="ChEBI" id="CHEBI:58359"/>
    </ligand>
</feature>
<feature type="binding site" evidence="1">
    <location>
        <position position="462"/>
    </location>
    <ligand>
        <name>L-glutamine</name>
        <dbReference type="ChEBI" id="CHEBI:58359"/>
    </ligand>
</feature>
<proteinExistence type="inferred from homology"/>
<protein>
    <recommendedName>
        <fullName evidence="1">CTP synthase</fullName>
        <ecNumber evidence="1">6.3.4.2</ecNumber>
    </recommendedName>
    <alternativeName>
        <fullName evidence="1">Cytidine 5'-triphosphate synthase</fullName>
    </alternativeName>
    <alternativeName>
        <fullName evidence="1">Cytidine triphosphate synthetase</fullName>
        <shortName evidence="1">CTP synthetase</shortName>
        <shortName evidence="1">CTPS</shortName>
    </alternativeName>
    <alternativeName>
        <fullName evidence="1">UTP--ammonia ligase</fullName>
    </alternativeName>
</protein>
<evidence type="ECO:0000255" key="1">
    <source>
        <dbReference type="HAMAP-Rule" id="MF_01227"/>
    </source>
</evidence>
<evidence type="ECO:0000256" key="2">
    <source>
        <dbReference type="SAM" id="MobiDB-lite"/>
    </source>
</evidence>
<comment type="function">
    <text evidence="1">Catalyzes the ATP-dependent amination of UTP to CTP with either L-glutamine or ammonia as the source of nitrogen. Regulates intracellular CTP levels through interactions with the four ribonucleotide triphosphates.</text>
</comment>
<comment type="catalytic activity">
    <reaction evidence="1">
        <text>UTP + L-glutamine + ATP + H2O = CTP + L-glutamate + ADP + phosphate + 2 H(+)</text>
        <dbReference type="Rhea" id="RHEA:26426"/>
        <dbReference type="ChEBI" id="CHEBI:15377"/>
        <dbReference type="ChEBI" id="CHEBI:15378"/>
        <dbReference type="ChEBI" id="CHEBI:29985"/>
        <dbReference type="ChEBI" id="CHEBI:30616"/>
        <dbReference type="ChEBI" id="CHEBI:37563"/>
        <dbReference type="ChEBI" id="CHEBI:43474"/>
        <dbReference type="ChEBI" id="CHEBI:46398"/>
        <dbReference type="ChEBI" id="CHEBI:58359"/>
        <dbReference type="ChEBI" id="CHEBI:456216"/>
        <dbReference type="EC" id="6.3.4.2"/>
    </reaction>
</comment>
<comment type="catalytic activity">
    <reaction evidence="1">
        <text>L-glutamine + H2O = L-glutamate + NH4(+)</text>
        <dbReference type="Rhea" id="RHEA:15889"/>
        <dbReference type="ChEBI" id="CHEBI:15377"/>
        <dbReference type="ChEBI" id="CHEBI:28938"/>
        <dbReference type="ChEBI" id="CHEBI:29985"/>
        <dbReference type="ChEBI" id="CHEBI:58359"/>
    </reaction>
</comment>
<comment type="catalytic activity">
    <reaction evidence="1">
        <text>UTP + NH4(+) + ATP = CTP + ADP + phosphate + 2 H(+)</text>
        <dbReference type="Rhea" id="RHEA:16597"/>
        <dbReference type="ChEBI" id="CHEBI:15378"/>
        <dbReference type="ChEBI" id="CHEBI:28938"/>
        <dbReference type="ChEBI" id="CHEBI:30616"/>
        <dbReference type="ChEBI" id="CHEBI:37563"/>
        <dbReference type="ChEBI" id="CHEBI:43474"/>
        <dbReference type="ChEBI" id="CHEBI:46398"/>
        <dbReference type="ChEBI" id="CHEBI:456216"/>
    </reaction>
</comment>
<comment type="activity regulation">
    <text evidence="1">Allosterically activated by GTP, when glutamine is the substrate; GTP has no effect on the reaction when ammonia is the substrate. The allosteric effector GTP functions by stabilizing the protein conformation that binds the tetrahedral intermediate(s) formed during glutamine hydrolysis. Inhibited by the product CTP, via allosteric rather than competitive inhibition.</text>
</comment>
<comment type="pathway">
    <text evidence="1">Pyrimidine metabolism; CTP biosynthesis via de novo pathway; CTP from UDP: step 2/2.</text>
</comment>
<comment type="subunit">
    <text evidence="1">Homotetramer.</text>
</comment>
<comment type="miscellaneous">
    <text evidence="1">CTPSs have evolved a hybrid strategy for distinguishing between UTP and CTP. The overlapping regions of the product feedback inhibitory and substrate sites recognize a common feature in both compounds, the triphosphate moiety. To differentiate isosteric substrate and product pyrimidine rings, an additional pocket far from the expected kinase/ligase catalytic site, specifically recognizes the cytosine and ribose portions of the product inhibitor.</text>
</comment>
<comment type="similarity">
    <text evidence="1">Belongs to the CTP synthase family.</text>
</comment>
<sequence>MAKFVFVTGGVVSSIGKGIVAASLGRLLKSKGYSVSILKLDPYLNVDPGTMSPFQHGEVFVTEDGAETDLDLGHYERFTDTAMSRLNSVTTGSIYQAVINKERRGDYDGRTVQVIPHITREIRERIKRVANNSGADVVISEIGGTVGDIESLPFLEAIREFKGDVKRNDVVYVHVTLLPYIGTSGEIKTKPTQHSVKELRSIGIQPDILVCRSDRPINDELKNKIGGFCGVNSEAVIASLDADSIYSVPLALKDEGLCKEVLDCLDLNDHESDLKDWERLVHKLRNPGPSVKVALVGKYVQLNDAYLSVVEALRHACISHDASLDLHWINAENIESEGAEKLLQGMDAIVVPGGFGNRGVNGKIAAIRWAREQRVPFLGLCLGMQCAVIEWARNIAGLEDASSAELNPNSKHPVIHLLPEQQDVVDLGGTMRLGVYPCRLQANTTGQSLYNEEVVYERHRHRYEFNNSYRTLLMESGYVISGTSPDGRLVELIELKNHPFFIACQYHPEFLSRPGKPHPLFGGLIQAAQIRVPSSPSEAFNPQSKIIEKKSLEQQ</sequence>
<keyword id="KW-0067">ATP-binding</keyword>
<keyword id="KW-0315">Glutamine amidotransferase</keyword>
<keyword id="KW-0436">Ligase</keyword>
<keyword id="KW-0460">Magnesium</keyword>
<keyword id="KW-0479">Metal-binding</keyword>
<keyword id="KW-0547">Nucleotide-binding</keyword>
<keyword id="KW-0665">Pyrimidine biosynthesis</keyword>
<organism>
    <name type="scientific">Prochlorococcus marinus (strain NATL1A)</name>
    <dbReference type="NCBI Taxonomy" id="167555"/>
    <lineage>
        <taxon>Bacteria</taxon>
        <taxon>Bacillati</taxon>
        <taxon>Cyanobacteriota</taxon>
        <taxon>Cyanophyceae</taxon>
        <taxon>Synechococcales</taxon>
        <taxon>Prochlorococcaceae</taxon>
        <taxon>Prochlorococcus</taxon>
    </lineage>
</organism>
<accession>A2C5F9</accession>
<gene>
    <name evidence="1" type="primary">pyrG</name>
    <name type="ordered locus">NATL1_21631</name>
</gene>
<reference key="1">
    <citation type="journal article" date="2007" name="PLoS Genet.">
        <title>Patterns and implications of gene gain and loss in the evolution of Prochlorococcus.</title>
        <authorList>
            <person name="Kettler G.C."/>
            <person name="Martiny A.C."/>
            <person name="Huang K."/>
            <person name="Zucker J."/>
            <person name="Coleman M.L."/>
            <person name="Rodrigue S."/>
            <person name="Chen F."/>
            <person name="Lapidus A."/>
            <person name="Ferriera S."/>
            <person name="Johnson J."/>
            <person name="Steglich C."/>
            <person name="Church G.M."/>
            <person name="Richardson P."/>
            <person name="Chisholm S.W."/>
        </authorList>
    </citation>
    <scope>NUCLEOTIDE SEQUENCE [LARGE SCALE GENOMIC DNA]</scope>
    <source>
        <strain>NATL1A</strain>
    </source>
</reference>
<name>PYRG_PROM1</name>
<dbReference type="EC" id="6.3.4.2" evidence="1"/>
<dbReference type="EMBL" id="CP000553">
    <property type="protein sequence ID" value="ABM76719.1"/>
    <property type="molecule type" value="Genomic_DNA"/>
</dbReference>
<dbReference type="RefSeq" id="WP_011824655.1">
    <property type="nucleotide sequence ID" value="NC_008819.1"/>
</dbReference>
<dbReference type="SMR" id="A2C5F9"/>
<dbReference type="KEGG" id="pme:NATL1_21631"/>
<dbReference type="eggNOG" id="COG0504">
    <property type="taxonomic scope" value="Bacteria"/>
</dbReference>
<dbReference type="HOGENOM" id="CLU_011675_5_0_3"/>
<dbReference type="UniPathway" id="UPA00159">
    <property type="reaction ID" value="UER00277"/>
</dbReference>
<dbReference type="Proteomes" id="UP000002592">
    <property type="component" value="Chromosome"/>
</dbReference>
<dbReference type="GO" id="GO:0005829">
    <property type="term" value="C:cytosol"/>
    <property type="evidence" value="ECO:0007669"/>
    <property type="project" value="TreeGrafter"/>
</dbReference>
<dbReference type="GO" id="GO:0005524">
    <property type="term" value="F:ATP binding"/>
    <property type="evidence" value="ECO:0007669"/>
    <property type="project" value="UniProtKB-KW"/>
</dbReference>
<dbReference type="GO" id="GO:0003883">
    <property type="term" value="F:CTP synthase activity"/>
    <property type="evidence" value="ECO:0007669"/>
    <property type="project" value="UniProtKB-UniRule"/>
</dbReference>
<dbReference type="GO" id="GO:0004359">
    <property type="term" value="F:glutaminase activity"/>
    <property type="evidence" value="ECO:0007669"/>
    <property type="project" value="RHEA"/>
</dbReference>
<dbReference type="GO" id="GO:0042802">
    <property type="term" value="F:identical protein binding"/>
    <property type="evidence" value="ECO:0007669"/>
    <property type="project" value="TreeGrafter"/>
</dbReference>
<dbReference type="GO" id="GO:0046872">
    <property type="term" value="F:metal ion binding"/>
    <property type="evidence" value="ECO:0007669"/>
    <property type="project" value="UniProtKB-KW"/>
</dbReference>
<dbReference type="GO" id="GO:0044210">
    <property type="term" value="P:'de novo' CTP biosynthetic process"/>
    <property type="evidence" value="ECO:0007669"/>
    <property type="project" value="UniProtKB-UniRule"/>
</dbReference>
<dbReference type="GO" id="GO:0019856">
    <property type="term" value="P:pyrimidine nucleobase biosynthetic process"/>
    <property type="evidence" value="ECO:0007669"/>
    <property type="project" value="TreeGrafter"/>
</dbReference>
<dbReference type="CDD" id="cd03113">
    <property type="entry name" value="CTPS_N"/>
    <property type="match status" value="1"/>
</dbReference>
<dbReference type="CDD" id="cd01746">
    <property type="entry name" value="GATase1_CTP_Synthase"/>
    <property type="match status" value="1"/>
</dbReference>
<dbReference type="FunFam" id="3.40.50.300:FF:000009">
    <property type="entry name" value="CTP synthase"/>
    <property type="match status" value="1"/>
</dbReference>
<dbReference type="FunFam" id="3.40.50.880:FF:000002">
    <property type="entry name" value="CTP synthase"/>
    <property type="match status" value="1"/>
</dbReference>
<dbReference type="Gene3D" id="3.40.50.880">
    <property type="match status" value="1"/>
</dbReference>
<dbReference type="Gene3D" id="3.40.50.300">
    <property type="entry name" value="P-loop containing nucleotide triphosphate hydrolases"/>
    <property type="match status" value="1"/>
</dbReference>
<dbReference type="HAMAP" id="MF_01227">
    <property type="entry name" value="PyrG"/>
    <property type="match status" value="1"/>
</dbReference>
<dbReference type="InterPro" id="IPR029062">
    <property type="entry name" value="Class_I_gatase-like"/>
</dbReference>
<dbReference type="InterPro" id="IPR004468">
    <property type="entry name" value="CTP_synthase"/>
</dbReference>
<dbReference type="InterPro" id="IPR017456">
    <property type="entry name" value="CTP_synthase_N"/>
</dbReference>
<dbReference type="InterPro" id="IPR017926">
    <property type="entry name" value="GATASE"/>
</dbReference>
<dbReference type="InterPro" id="IPR033828">
    <property type="entry name" value="GATase1_CTP_Synthase"/>
</dbReference>
<dbReference type="InterPro" id="IPR027417">
    <property type="entry name" value="P-loop_NTPase"/>
</dbReference>
<dbReference type="NCBIfam" id="NF003792">
    <property type="entry name" value="PRK05380.1"/>
    <property type="match status" value="1"/>
</dbReference>
<dbReference type="NCBIfam" id="TIGR00337">
    <property type="entry name" value="PyrG"/>
    <property type="match status" value="1"/>
</dbReference>
<dbReference type="PANTHER" id="PTHR11550">
    <property type="entry name" value="CTP SYNTHASE"/>
    <property type="match status" value="1"/>
</dbReference>
<dbReference type="PANTHER" id="PTHR11550:SF0">
    <property type="entry name" value="CTP SYNTHASE-RELATED"/>
    <property type="match status" value="1"/>
</dbReference>
<dbReference type="Pfam" id="PF06418">
    <property type="entry name" value="CTP_synth_N"/>
    <property type="match status" value="1"/>
</dbReference>
<dbReference type="Pfam" id="PF00117">
    <property type="entry name" value="GATase"/>
    <property type="match status" value="1"/>
</dbReference>
<dbReference type="SUPFAM" id="SSF52317">
    <property type="entry name" value="Class I glutamine amidotransferase-like"/>
    <property type="match status" value="1"/>
</dbReference>
<dbReference type="SUPFAM" id="SSF52540">
    <property type="entry name" value="P-loop containing nucleoside triphosphate hydrolases"/>
    <property type="match status" value="1"/>
</dbReference>
<dbReference type="PROSITE" id="PS51273">
    <property type="entry name" value="GATASE_TYPE_1"/>
    <property type="match status" value="1"/>
</dbReference>